<name>MURA_FINM2</name>
<gene>
    <name evidence="1" type="primary">murA</name>
    <name type="ordered locus">FMG_1500</name>
</gene>
<dbReference type="EC" id="2.5.1.7" evidence="1"/>
<dbReference type="EMBL" id="AP008971">
    <property type="protein sequence ID" value="BAG08918.1"/>
    <property type="molecule type" value="Genomic_DNA"/>
</dbReference>
<dbReference type="SMR" id="B0S3H8"/>
<dbReference type="STRING" id="334413.FMG_1500"/>
<dbReference type="KEGG" id="fma:FMG_1500"/>
<dbReference type="eggNOG" id="COG0766">
    <property type="taxonomic scope" value="Bacteria"/>
</dbReference>
<dbReference type="HOGENOM" id="CLU_027387_0_0_9"/>
<dbReference type="UniPathway" id="UPA00219"/>
<dbReference type="Proteomes" id="UP000001319">
    <property type="component" value="Chromosome"/>
</dbReference>
<dbReference type="GO" id="GO:0005737">
    <property type="term" value="C:cytoplasm"/>
    <property type="evidence" value="ECO:0007669"/>
    <property type="project" value="UniProtKB-SubCell"/>
</dbReference>
<dbReference type="GO" id="GO:0008760">
    <property type="term" value="F:UDP-N-acetylglucosamine 1-carboxyvinyltransferase activity"/>
    <property type="evidence" value="ECO:0007669"/>
    <property type="project" value="UniProtKB-UniRule"/>
</dbReference>
<dbReference type="GO" id="GO:0051301">
    <property type="term" value="P:cell division"/>
    <property type="evidence" value="ECO:0007669"/>
    <property type="project" value="UniProtKB-KW"/>
</dbReference>
<dbReference type="GO" id="GO:0071555">
    <property type="term" value="P:cell wall organization"/>
    <property type="evidence" value="ECO:0007669"/>
    <property type="project" value="UniProtKB-KW"/>
</dbReference>
<dbReference type="GO" id="GO:0009252">
    <property type="term" value="P:peptidoglycan biosynthetic process"/>
    <property type="evidence" value="ECO:0007669"/>
    <property type="project" value="UniProtKB-UniRule"/>
</dbReference>
<dbReference type="GO" id="GO:0008360">
    <property type="term" value="P:regulation of cell shape"/>
    <property type="evidence" value="ECO:0007669"/>
    <property type="project" value="UniProtKB-KW"/>
</dbReference>
<dbReference type="GO" id="GO:0019277">
    <property type="term" value="P:UDP-N-acetylgalactosamine biosynthetic process"/>
    <property type="evidence" value="ECO:0007669"/>
    <property type="project" value="InterPro"/>
</dbReference>
<dbReference type="CDD" id="cd01555">
    <property type="entry name" value="UdpNAET"/>
    <property type="match status" value="1"/>
</dbReference>
<dbReference type="FunFam" id="3.65.10.10:FF:000001">
    <property type="entry name" value="UDP-N-acetylglucosamine 1-carboxyvinyltransferase"/>
    <property type="match status" value="1"/>
</dbReference>
<dbReference type="Gene3D" id="3.65.10.10">
    <property type="entry name" value="Enolpyruvate transferase domain"/>
    <property type="match status" value="2"/>
</dbReference>
<dbReference type="HAMAP" id="MF_00111">
    <property type="entry name" value="MurA"/>
    <property type="match status" value="1"/>
</dbReference>
<dbReference type="InterPro" id="IPR001986">
    <property type="entry name" value="Enolpyruvate_Tfrase_dom"/>
</dbReference>
<dbReference type="InterPro" id="IPR036968">
    <property type="entry name" value="Enolpyruvate_Tfrase_sf"/>
</dbReference>
<dbReference type="InterPro" id="IPR050068">
    <property type="entry name" value="MurA_subfamily"/>
</dbReference>
<dbReference type="InterPro" id="IPR013792">
    <property type="entry name" value="RNA3'P_cycl/enolpyr_Trfase_a/b"/>
</dbReference>
<dbReference type="InterPro" id="IPR005750">
    <property type="entry name" value="UDP_GlcNAc_COvinyl_MurA"/>
</dbReference>
<dbReference type="NCBIfam" id="TIGR01072">
    <property type="entry name" value="murA"/>
    <property type="match status" value="1"/>
</dbReference>
<dbReference type="NCBIfam" id="NF006873">
    <property type="entry name" value="PRK09369.1"/>
    <property type="match status" value="1"/>
</dbReference>
<dbReference type="PANTHER" id="PTHR43783">
    <property type="entry name" value="UDP-N-ACETYLGLUCOSAMINE 1-CARBOXYVINYLTRANSFERASE"/>
    <property type="match status" value="1"/>
</dbReference>
<dbReference type="PANTHER" id="PTHR43783:SF1">
    <property type="entry name" value="UDP-N-ACETYLGLUCOSAMINE 1-CARBOXYVINYLTRANSFERASE"/>
    <property type="match status" value="1"/>
</dbReference>
<dbReference type="Pfam" id="PF00275">
    <property type="entry name" value="EPSP_synthase"/>
    <property type="match status" value="1"/>
</dbReference>
<dbReference type="SUPFAM" id="SSF55205">
    <property type="entry name" value="EPT/RTPC-like"/>
    <property type="match status" value="1"/>
</dbReference>
<keyword id="KW-0131">Cell cycle</keyword>
<keyword id="KW-0132">Cell division</keyword>
<keyword id="KW-0133">Cell shape</keyword>
<keyword id="KW-0961">Cell wall biogenesis/degradation</keyword>
<keyword id="KW-0963">Cytoplasm</keyword>
<keyword id="KW-0573">Peptidoglycan synthesis</keyword>
<keyword id="KW-0670">Pyruvate</keyword>
<keyword id="KW-1185">Reference proteome</keyword>
<keyword id="KW-0808">Transferase</keyword>
<evidence type="ECO:0000255" key="1">
    <source>
        <dbReference type="HAMAP-Rule" id="MF_00111"/>
    </source>
</evidence>
<comment type="function">
    <text evidence="1">Cell wall formation. Adds enolpyruvyl to UDP-N-acetylglucosamine.</text>
</comment>
<comment type="catalytic activity">
    <reaction evidence="1">
        <text>phosphoenolpyruvate + UDP-N-acetyl-alpha-D-glucosamine = UDP-N-acetyl-3-O-(1-carboxyvinyl)-alpha-D-glucosamine + phosphate</text>
        <dbReference type="Rhea" id="RHEA:18681"/>
        <dbReference type="ChEBI" id="CHEBI:43474"/>
        <dbReference type="ChEBI" id="CHEBI:57705"/>
        <dbReference type="ChEBI" id="CHEBI:58702"/>
        <dbReference type="ChEBI" id="CHEBI:68483"/>
        <dbReference type="EC" id="2.5.1.7"/>
    </reaction>
</comment>
<comment type="pathway">
    <text evidence="1">Cell wall biogenesis; peptidoglycan biosynthesis.</text>
</comment>
<comment type="subcellular location">
    <subcellularLocation>
        <location evidence="1">Cytoplasm</location>
    </subcellularLocation>
</comment>
<comment type="similarity">
    <text evidence="1">Belongs to the EPSP synthase family. MurA subfamily.</text>
</comment>
<feature type="chain" id="PRO_1000094692" description="UDP-N-acetylglucosamine 1-carboxyvinyltransferase">
    <location>
        <begin position="1"/>
        <end position="423"/>
    </location>
</feature>
<feature type="active site" description="Proton donor" evidence="1">
    <location>
        <position position="117"/>
    </location>
</feature>
<feature type="binding site" evidence="1">
    <location>
        <begin position="22"/>
        <end position="23"/>
    </location>
    <ligand>
        <name>phosphoenolpyruvate</name>
        <dbReference type="ChEBI" id="CHEBI:58702"/>
    </ligand>
</feature>
<feature type="binding site" evidence="1">
    <location>
        <position position="93"/>
    </location>
    <ligand>
        <name>UDP-N-acetyl-alpha-D-glucosamine</name>
        <dbReference type="ChEBI" id="CHEBI:57705"/>
    </ligand>
</feature>
<feature type="binding site" evidence="1">
    <location>
        <begin position="122"/>
        <end position="126"/>
    </location>
    <ligand>
        <name>UDP-N-acetyl-alpha-D-glucosamine</name>
        <dbReference type="ChEBI" id="CHEBI:57705"/>
    </ligand>
</feature>
<feature type="binding site" evidence="1">
    <location>
        <position position="308"/>
    </location>
    <ligand>
        <name>UDP-N-acetyl-alpha-D-glucosamine</name>
        <dbReference type="ChEBI" id="CHEBI:57705"/>
    </ligand>
</feature>
<feature type="binding site" evidence="1">
    <location>
        <position position="330"/>
    </location>
    <ligand>
        <name>UDP-N-acetyl-alpha-D-glucosamine</name>
        <dbReference type="ChEBI" id="CHEBI:57705"/>
    </ligand>
</feature>
<feature type="modified residue" description="2-(S-cysteinyl)pyruvic acid O-phosphothioketal" evidence="1">
    <location>
        <position position="117"/>
    </location>
</feature>
<protein>
    <recommendedName>
        <fullName evidence="1">UDP-N-acetylglucosamine 1-carboxyvinyltransferase</fullName>
        <ecNumber evidence="1">2.5.1.7</ecNumber>
    </recommendedName>
    <alternativeName>
        <fullName evidence="1">Enoylpyruvate transferase</fullName>
    </alternativeName>
    <alternativeName>
        <fullName evidence="1">UDP-N-acetylglucosamine enolpyruvyl transferase</fullName>
        <shortName evidence="1">EPT</shortName>
    </alternativeName>
</protein>
<organism>
    <name type="scientific">Finegoldia magna (strain ATCC 29328 / DSM 20472 / WAL 2508)</name>
    <name type="common">Peptostreptococcus magnus</name>
    <dbReference type="NCBI Taxonomy" id="334413"/>
    <lineage>
        <taxon>Bacteria</taxon>
        <taxon>Bacillati</taxon>
        <taxon>Bacillota</taxon>
        <taxon>Tissierellia</taxon>
        <taxon>Tissierellales</taxon>
        <taxon>Peptoniphilaceae</taxon>
        <taxon>Finegoldia</taxon>
    </lineage>
</organism>
<reference key="1">
    <citation type="journal article" date="2008" name="DNA Res.">
        <title>Complete genome sequence of Finegoldia magna, an anaerobic opportunistic pathogen.</title>
        <authorList>
            <person name="Goto T."/>
            <person name="Yamashita A."/>
            <person name="Hirakawa H."/>
            <person name="Matsutani M."/>
            <person name="Todo K."/>
            <person name="Ohshima K."/>
            <person name="Toh H."/>
            <person name="Miyamoto K."/>
            <person name="Kuhara S."/>
            <person name="Hattori M."/>
            <person name="Shimizu T."/>
            <person name="Akimoto S."/>
        </authorList>
    </citation>
    <scope>NUCLEOTIDE SEQUENCE [LARGE SCALE GENOMIC DNA]</scope>
    <source>
        <strain>ATCC 29328 / DSM 20472 / WAL 2508</strain>
    </source>
</reference>
<sequence>MEVIQVKKSLNLKGEVKIDGAKNSALPIIAASLLGTEPIILEDVPKLKDVSIILKVLEELGSKVTYLDKNKVEIDSSNVNNSVTPHELMNKMRASFLVMGPLLTRLGQTKTYLPGGCAIGSRPVDLHLKGFKALGAEIESTDEKIEAIAKDGLIGGEIYLDFPSVGATQNIMMAATMAKGETVIENAAKEPEIVDLASFLNKLGAKVRGAGTSTIRIVGVDKLHGARHTIIPDRIEAATFMVASAITRGDVTVKNCISSHIMPIIAKLREVGCEVIENEDEDSIRVIATGRLKGTKIKTLPYPGFPTDVQAQFMALMTVCKGQSSVEETVFENRFMHVEQLQKMGAAIATEGNEASIAGVDSLQGATVKSTDLRAGAALILAGLVADGTTNVTDIYHIDRGYDDIVSKFKKLGANIERIEIED</sequence>
<accession>B0S3H8</accession>
<proteinExistence type="inferred from homology"/>